<protein>
    <recommendedName>
        <fullName>Uncharacterized protein C03F11.4</fullName>
    </recommendedName>
</protein>
<dbReference type="EMBL" id="FO080310">
    <property type="protein sequence ID" value="CCD62777.1"/>
    <property type="molecule type" value="Genomic_DNA"/>
</dbReference>
<dbReference type="RefSeq" id="NP_508920.3">
    <property type="nucleotide sequence ID" value="NM_076519.7"/>
</dbReference>
<dbReference type="SMR" id="Q11125"/>
<dbReference type="BioGRID" id="45746">
    <property type="interactions" value="1"/>
</dbReference>
<dbReference type="FunCoup" id="Q11125">
    <property type="interactions" value="1"/>
</dbReference>
<dbReference type="PaxDb" id="6239-C03F11.4.1"/>
<dbReference type="PeptideAtlas" id="Q11125"/>
<dbReference type="EnsemblMetazoa" id="C03F11.4.1">
    <property type="protein sequence ID" value="C03F11.4.1"/>
    <property type="gene ID" value="WBGene00015390"/>
</dbReference>
<dbReference type="EnsemblMetazoa" id="C03F11.4.2">
    <property type="protein sequence ID" value="C03F11.4.2"/>
    <property type="gene ID" value="WBGene00015390"/>
</dbReference>
<dbReference type="EnsemblMetazoa" id="C03F11.4.3">
    <property type="protein sequence ID" value="C03F11.4.3"/>
    <property type="gene ID" value="WBGene00015390"/>
</dbReference>
<dbReference type="GeneID" id="180813"/>
<dbReference type="KEGG" id="cel:CELE_C03F11.4"/>
<dbReference type="UCSC" id="C03F11.4.1">
    <property type="organism name" value="c. elegans"/>
</dbReference>
<dbReference type="AGR" id="WB:WBGene00015390"/>
<dbReference type="CTD" id="180813"/>
<dbReference type="WormBase" id="C03F11.4">
    <property type="protein sequence ID" value="CE39128"/>
    <property type="gene ID" value="WBGene00015390"/>
</dbReference>
<dbReference type="eggNOG" id="ENOG502THYZ">
    <property type="taxonomic scope" value="Eukaryota"/>
</dbReference>
<dbReference type="HOGENOM" id="CLU_710249_0_0_1"/>
<dbReference type="InParanoid" id="Q11125"/>
<dbReference type="OrthoDB" id="10643134at2759"/>
<dbReference type="PRO" id="PR:Q11125"/>
<dbReference type="Proteomes" id="UP000001940">
    <property type="component" value="Chromosome X"/>
</dbReference>
<dbReference type="Bgee" id="WBGene00015390">
    <property type="expression patterns" value="Expressed in adult organism and 3 other cell types or tissues"/>
</dbReference>
<sequence length="389" mass="45302">MVHATSQSASTEKNVKPCIETDTEEVNHKNQTKQYLSESESGDEYDEDLENAVSECSYQTATTSSVADTDISNICDQLLVLSTTNHKSMGSTRGKKKRGKTAKKAKKANRAQKITEEEIEAIKKKKKLDADKAYELRQEQMKIRQEKIDASDRNKIYRRLAQTAVDMLRKEERKLPPEIKQLDEDLEYYVENSKFYLRINLRDRYLETRVDEISEKYIGPALEHKTELLKIYEDLIKRSLQAFRLFMFLKTLNEKSVDYTKFEVLTLSFVMKGFEDDWLEVNGTYEENESYLSFEKNILHDIPETDQHVNAAEFVMNKLIYYAKKDDDGTLNLKECHMKEAYTGAGQLIAEYKQCTNAIAFLQDNRENLAYNLMEEWFLVSRKPSPIVL</sequence>
<evidence type="ECO:0000256" key="1">
    <source>
        <dbReference type="SAM" id="MobiDB-lite"/>
    </source>
</evidence>
<gene>
    <name type="ORF">C03F11.4</name>
</gene>
<proteinExistence type="predicted"/>
<organism>
    <name type="scientific">Caenorhabditis elegans</name>
    <dbReference type="NCBI Taxonomy" id="6239"/>
    <lineage>
        <taxon>Eukaryota</taxon>
        <taxon>Metazoa</taxon>
        <taxon>Ecdysozoa</taxon>
        <taxon>Nematoda</taxon>
        <taxon>Chromadorea</taxon>
        <taxon>Rhabditida</taxon>
        <taxon>Rhabditina</taxon>
        <taxon>Rhabditomorpha</taxon>
        <taxon>Rhabditoidea</taxon>
        <taxon>Rhabditidae</taxon>
        <taxon>Peloderinae</taxon>
        <taxon>Caenorhabditis</taxon>
    </lineage>
</organism>
<feature type="chain" id="PRO_0000065133" description="Uncharacterized protein C03F11.4">
    <location>
        <begin position="1"/>
        <end position="389"/>
    </location>
</feature>
<feature type="region of interest" description="Disordered" evidence="1">
    <location>
        <begin position="1"/>
        <end position="49"/>
    </location>
</feature>
<feature type="region of interest" description="Disordered" evidence="1">
    <location>
        <begin position="86"/>
        <end position="111"/>
    </location>
</feature>
<feature type="compositionally biased region" description="Polar residues" evidence="1">
    <location>
        <begin position="1"/>
        <end position="12"/>
    </location>
</feature>
<feature type="compositionally biased region" description="Acidic residues" evidence="1">
    <location>
        <begin position="40"/>
        <end position="49"/>
    </location>
</feature>
<feature type="compositionally biased region" description="Basic residues" evidence="1">
    <location>
        <begin position="93"/>
        <end position="110"/>
    </location>
</feature>
<keyword id="KW-1185">Reference proteome</keyword>
<name>YX14_CAEEL</name>
<reference key="1">
    <citation type="journal article" date="1998" name="Science">
        <title>Genome sequence of the nematode C. elegans: a platform for investigating biology.</title>
        <authorList>
            <consortium name="The C. elegans sequencing consortium"/>
        </authorList>
    </citation>
    <scope>NUCLEOTIDE SEQUENCE [LARGE SCALE GENOMIC DNA]</scope>
    <source>
        <strain>Bristol N2</strain>
    </source>
</reference>
<accession>Q11125</accession>